<proteinExistence type="evidence at transcript level"/>
<accession>A2VDR8</accession>
<evidence type="ECO:0000250" key="1">
    <source>
        <dbReference type="UniProtKB" id="P83436"/>
    </source>
</evidence>
<evidence type="ECO:0000305" key="2"/>
<sequence length="770" mass="86527">MDFSKFLAEDFDVKEWINAAFRAGPKEAAAGKADSHAATLVMKLQLFIQEVNHAVEETSHQALQNMPKVLRDVEALKQEASFLKEQMILVKEDIKKFEQDTSQSMQVLVEIDQVKSRMQLAAESLQEADKWSTLSADIEETFKTQDIAVISAKLTGMQNSLMMLVDTPDYSEKCVHLEALKNRLEALASPQIVAAFTSQSIDQSKMFVKVFSEIDRMPQLLAYYYKCHKVQLLAAWQELCQTDLPLDRQLTGLYDALLGAWHAQIQWASQVFKNPHDVVTVLLIQTLGALVPSLPVCLSSGVERAGPELELVKLLEFYDATAHFAKGLEMALLPHAYEQNLVKVMELVDAVYGPYKPYQLKYGDMEEKYLLIQFSEVPLEHGEVIDCVQELSHSVNKLFGLSSAAVDRCIRFTSGLGTCGLLTALKSLFAKYVSDFTSTLHSIRKKYRLDDIPLNSLFQEDWTAFQNSIRIIATCGELLRQCGDFEQQLANRILSTAGKYLSDSFSPRSLTGFQDSILTDKKSSAKNPWQEYNYLQKDSPAEYGSLMEILYTLKEKGSSNHHLLSASRSALTRLNQQAHQLAFDSVFLRIKQQLLLIPKMDSWNTAGIGETLTDDLPTFSLTPLEYISNIGQYIMSLPLNLEPFVTQEDSALELALHAGKLPFPPEQGDELPELDNMADNWLGSIARATMQTYCDAILQIPELTPHSTKQLATDIDYLINVMDALGLQPSRTLQNIVMLLKAKPEDYRQVSKGLPRRLATTVATMRSVDY</sequence>
<feature type="chain" id="PRO_0000341684" description="Conserved oligomeric Golgi complex subunit 7">
    <location>
        <begin position="1"/>
        <end position="770"/>
    </location>
</feature>
<protein>
    <recommendedName>
        <fullName>Conserved oligomeric Golgi complex subunit 7</fullName>
        <shortName>COG complex subunit 7</shortName>
    </recommendedName>
    <alternativeName>
        <fullName>Component of oligomeric Golgi complex 7</fullName>
    </alternativeName>
</protein>
<comment type="function">
    <text evidence="1">Required for normal Golgi function.</text>
</comment>
<comment type="subunit">
    <text evidence="1">Component of the conserved oligomeric Golgi complex which is composed of eight different subunits and is required for normal Golgi morphology and localization.</text>
</comment>
<comment type="subcellular location">
    <subcellularLocation>
        <location evidence="1">Golgi apparatus membrane</location>
        <topology evidence="1">Peripheral membrane protein</topology>
    </subcellularLocation>
</comment>
<comment type="similarity">
    <text evidence="2">Belongs to the COG7 family.</text>
</comment>
<dbReference type="EMBL" id="BC133371">
    <property type="protein sequence ID" value="AAI33372.1"/>
    <property type="molecule type" value="mRNA"/>
</dbReference>
<dbReference type="RefSeq" id="NP_001076841.1">
    <property type="nucleotide sequence ID" value="NM_001083372.1"/>
</dbReference>
<dbReference type="SMR" id="A2VDR8"/>
<dbReference type="CORUM" id="A2VDR8"/>
<dbReference type="FunCoup" id="A2VDR8">
    <property type="interactions" value="3997"/>
</dbReference>
<dbReference type="STRING" id="9913.ENSBTAP00000043047"/>
<dbReference type="PaxDb" id="9913-ENSBTAP00000043047"/>
<dbReference type="GeneID" id="504790"/>
<dbReference type="KEGG" id="bta:504790"/>
<dbReference type="CTD" id="91949"/>
<dbReference type="eggNOG" id="KOG4182">
    <property type="taxonomic scope" value="Eukaryota"/>
</dbReference>
<dbReference type="HOGENOM" id="CLU_006044_2_0_1"/>
<dbReference type="InParanoid" id="A2VDR8"/>
<dbReference type="OrthoDB" id="245173at2759"/>
<dbReference type="TreeFam" id="TF324498"/>
<dbReference type="Proteomes" id="UP000009136">
    <property type="component" value="Unplaced"/>
</dbReference>
<dbReference type="GO" id="GO:0005794">
    <property type="term" value="C:Golgi apparatus"/>
    <property type="evidence" value="ECO:0000250"/>
    <property type="project" value="UniProtKB"/>
</dbReference>
<dbReference type="GO" id="GO:0000139">
    <property type="term" value="C:Golgi membrane"/>
    <property type="evidence" value="ECO:0007669"/>
    <property type="project" value="UniProtKB-SubCell"/>
</dbReference>
<dbReference type="GO" id="GO:0017119">
    <property type="term" value="C:Golgi transport complex"/>
    <property type="evidence" value="ECO:0000250"/>
    <property type="project" value="UniProtKB"/>
</dbReference>
<dbReference type="GO" id="GO:0007030">
    <property type="term" value="P:Golgi organization"/>
    <property type="evidence" value="ECO:0000318"/>
    <property type="project" value="GO_Central"/>
</dbReference>
<dbReference type="GO" id="GO:0006886">
    <property type="term" value="P:intracellular protein transport"/>
    <property type="evidence" value="ECO:0000250"/>
    <property type="project" value="UniProtKB"/>
</dbReference>
<dbReference type="GO" id="GO:0006486">
    <property type="term" value="P:protein glycosylation"/>
    <property type="evidence" value="ECO:0000250"/>
    <property type="project" value="UniProtKB"/>
</dbReference>
<dbReference type="GO" id="GO:0034067">
    <property type="term" value="P:protein localization to Golgi apparatus"/>
    <property type="evidence" value="ECO:0000250"/>
    <property type="project" value="UniProtKB"/>
</dbReference>
<dbReference type="GO" id="GO:0033365">
    <property type="term" value="P:protein localization to organelle"/>
    <property type="evidence" value="ECO:0000250"/>
    <property type="project" value="UniProtKB"/>
</dbReference>
<dbReference type="GO" id="GO:0050821">
    <property type="term" value="P:protein stabilization"/>
    <property type="evidence" value="ECO:0000250"/>
    <property type="project" value="UniProtKB"/>
</dbReference>
<dbReference type="GO" id="GO:0006890">
    <property type="term" value="P:retrograde vesicle-mediated transport, Golgi to endoplasmic reticulum"/>
    <property type="evidence" value="ECO:0000250"/>
    <property type="project" value="UniProtKB"/>
</dbReference>
<dbReference type="InterPro" id="IPR019335">
    <property type="entry name" value="COG7"/>
</dbReference>
<dbReference type="PANTHER" id="PTHR21443">
    <property type="entry name" value="CONSERVED OLIGOMERIC GOLGI COMPLEX COMPONENT 7"/>
    <property type="match status" value="1"/>
</dbReference>
<dbReference type="PANTHER" id="PTHR21443:SF0">
    <property type="entry name" value="CONSERVED OLIGOMERIC GOLGI COMPLEX SUBUNIT 7"/>
    <property type="match status" value="1"/>
</dbReference>
<dbReference type="Pfam" id="PF10191">
    <property type="entry name" value="COG7"/>
    <property type="match status" value="1"/>
</dbReference>
<name>COG7_BOVIN</name>
<keyword id="KW-0333">Golgi apparatus</keyword>
<keyword id="KW-0472">Membrane</keyword>
<keyword id="KW-0653">Protein transport</keyword>
<keyword id="KW-1185">Reference proteome</keyword>
<keyword id="KW-0813">Transport</keyword>
<gene>
    <name type="primary">COG7</name>
</gene>
<organism>
    <name type="scientific">Bos taurus</name>
    <name type="common">Bovine</name>
    <dbReference type="NCBI Taxonomy" id="9913"/>
    <lineage>
        <taxon>Eukaryota</taxon>
        <taxon>Metazoa</taxon>
        <taxon>Chordata</taxon>
        <taxon>Craniata</taxon>
        <taxon>Vertebrata</taxon>
        <taxon>Euteleostomi</taxon>
        <taxon>Mammalia</taxon>
        <taxon>Eutheria</taxon>
        <taxon>Laurasiatheria</taxon>
        <taxon>Artiodactyla</taxon>
        <taxon>Ruminantia</taxon>
        <taxon>Pecora</taxon>
        <taxon>Bovidae</taxon>
        <taxon>Bovinae</taxon>
        <taxon>Bos</taxon>
    </lineage>
</organism>
<reference key="1">
    <citation type="submission" date="2007-02" db="EMBL/GenBank/DDBJ databases">
        <authorList>
            <consortium name="NIH - Mammalian Gene Collection (MGC) project"/>
        </authorList>
    </citation>
    <scope>NUCLEOTIDE SEQUENCE [LARGE SCALE MRNA]</scope>
    <source>
        <strain>Hereford</strain>
        <tissue>Fetal skin</tissue>
    </source>
</reference>